<comment type="similarity">
    <text evidence="1">Belongs to the bacterial ribosomal protein bL35 family.</text>
</comment>
<keyword id="KW-0687">Ribonucleoprotein</keyword>
<keyword id="KW-0689">Ribosomal protein</keyword>
<evidence type="ECO:0000255" key="1">
    <source>
        <dbReference type="HAMAP-Rule" id="MF_00514"/>
    </source>
</evidence>
<evidence type="ECO:0000305" key="2"/>
<reference key="1">
    <citation type="journal article" date="2006" name="J. Bacteriol.">
        <title>Complete genome sequence of Yersinia pestis strains Antiqua and Nepal516: evidence of gene reduction in an emerging pathogen.</title>
        <authorList>
            <person name="Chain P.S.G."/>
            <person name="Hu P."/>
            <person name="Malfatti S.A."/>
            <person name="Radnedge L."/>
            <person name="Larimer F."/>
            <person name="Vergez L.M."/>
            <person name="Worsham P."/>
            <person name="Chu M.C."/>
            <person name="Andersen G.L."/>
        </authorList>
    </citation>
    <scope>NUCLEOTIDE SEQUENCE [LARGE SCALE GENOMIC DNA]</scope>
    <source>
        <strain>Antiqua</strain>
    </source>
</reference>
<gene>
    <name evidence="1" type="primary">rpmI</name>
    <name type="ordered locus">YPA_1776</name>
</gene>
<accession>Q1C730</accession>
<protein>
    <recommendedName>
        <fullName evidence="1">Large ribosomal subunit protein bL35</fullName>
    </recommendedName>
    <alternativeName>
        <fullName evidence="2">50S ribosomal protein L35</fullName>
    </alternativeName>
</protein>
<sequence length="65" mass="7319">MPKIKTVRGAAKRFKKTANGGFKRKHANLRHILTKKATKRKRHLRPKGLVSKNDLGLVVACLPYA</sequence>
<name>RL35_YERPA</name>
<proteinExistence type="inferred from homology"/>
<organism>
    <name type="scientific">Yersinia pestis bv. Antiqua (strain Antiqua)</name>
    <dbReference type="NCBI Taxonomy" id="360102"/>
    <lineage>
        <taxon>Bacteria</taxon>
        <taxon>Pseudomonadati</taxon>
        <taxon>Pseudomonadota</taxon>
        <taxon>Gammaproteobacteria</taxon>
        <taxon>Enterobacterales</taxon>
        <taxon>Yersiniaceae</taxon>
        <taxon>Yersinia</taxon>
    </lineage>
</organism>
<dbReference type="EMBL" id="CP000308">
    <property type="protein sequence ID" value="ABG13742.1"/>
    <property type="molecule type" value="Genomic_DNA"/>
</dbReference>
<dbReference type="RefSeq" id="WP_002211834.1">
    <property type="nucleotide sequence ID" value="NZ_CP009906.1"/>
</dbReference>
<dbReference type="SMR" id="Q1C730"/>
<dbReference type="GeneID" id="97456073"/>
<dbReference type="KEGG" id="ypa:YPA_1776"/>
<dbReference type="Proteomes" id="UP000001971">
    <property type="component" value="Chromosome"/>
</dbReference>
<dbReference type="GO" id="GO:0022625">
    <property type="term" value="C:cytosolic large ribosomal subunit"/>
    <property type="evidence" value="ECO:0007669"/>
    <property type="project" value="TreeGrafter"/>
</dbReference>
<dbReference type="GO" id="GO:0003735">
    <property type="term" value="F:structural constituent of ribosome"/>
    <property type="evidence" value="ECO:0007669"/>
    <property type="project" value="InterPro"/>
</dbReference>
<dbReference type="GO" id="GO:0006412">
    <property type="term" value="P:translation"/>
    <property type="evidence" value="ECO:0007669"/>
    <property type="project" value="UniProtKB-UniRule"/>
</dbReference>
<dbReference type="FunFam" id="4.10.410.60:FF:000001">
    <property type="entry name" value="50S ribosomal protein L35"/>
    <property type="match status" value="1"/>
</dbReference>
<dbReference type="Gene3D" id="4.10.410.60">
    <property type="match status" value="1"/>
</dbReference>
<dbReference type="HAMAP" id="MF_00514">
    <property type="entry name" value="Ribosomal_bL35"/>
    <property type="match status" value="1"/>
</dbReference>
<dbReference type="InterPro" id="IPR001706">
    <property type="entry name" value="Ribosomal_bL35"/>
</dbReference>
<dbReference type="InterPro" id="IPR021137">
    <property type="entry name" value="Ribosomal_bL35-like"/>
</dbReference>
<dbReference type="InterPro" id="IPR018265">
    <property type="entry name" value="Ribosomal_bL35_CS"/>
</dbReference>
<dbReference type="InterPro" id="IPR037229">
    <property type="entry name" value="Ribosomal_bL35_sf"/>
</dbReference>
<dbReference type="NCBIfam" id="TIGR00001">
    <property type="entry name" value="rpmI_bact"/>
    <property type="match status" value="1"/>
</dbReference>
<dbReference type="PANTHER" id="PTHR33343">
    <property type="entry name" value="54S RIBOSOMAL PROTEIN BL35M"/>
    <property type="match status" value="1"/>
</dbReference>
<dbReference type="PANTHER" id="PTHR33343:SF1">
    <property type="entry name" value="LARGE RIBOSOMAL SUBUNIT PROTEIN BL35M"/>
    <property type="match status" value="1"/>
</dbReference>
<dbReference type="Pfam" id="PF01632">
    <property type="entry name" value="Ribosomal_L35p"/>
    <property type="match status" value="1"/>
</dbReference>
<dbReference type="PRINTS" id="PR00064">
    <property type="entry name" value="RIBOSOMALL35"/>
</dbReference>
<dbReference type="SUPFAM" id="SSF143034">
    <property type="entry name" value="L35p-like"/>
    <property type="match status" value="1"/>
</dbReference>
<dbReference type="PROSITE" id="PS00936">
    <property type="entry name" value="RIBOSOMAL_L35"/>
    <property type="match status" value="1"/>
</dbReference>
<feature type="chain" id="PRO_0000258787" description="Large ribosomal subunit protein bL35">
    <location>
        <begin position="1"/>
        <end position="65"/>
    </location>
</feature>